<sequence>MIETDKLAAKAVSAERIISASPASPNEEAFERALRPKLLDEYVGQEKVRGQLDIFMTAAKNRSEALDHVLLFGPPGLGKTTLAHIIAREMGVNLRQTSGPVLERPGDLAALLTNLEANDVLFIDEIHRLSPVVEEILYPALEDYQIDIMIGEGPAARSVKLDLQPFTLVGATTRAGMLTNPLRDRFGIVARLEFYTPAELAKIVTRSSGLLNAHIVDEGALEIAKRSRGTPRIANRLLRRVRDFAEVKADGIITREVADAALAMLDVDAVGFDLMDRKLLEAILHKFNGGPVGIDNLAAAIGEERDTIEDVLEPYLIQQGYLQRTPRGRVATASAYQHFGLGAPKSGPVRDLWDDNQ</sequence>
<dbReference type="EC" id="3.6.4.-" evidence="1"/>
<dbReference type="EMBL" id="CP001068">
    <property type="protein sequence ID" value="ACD25534.1"/>
    <property type="molecule type" value="Genomic_DNA"/>
</dbReference>
<dbReference type="SMR" id="B2UFL1"/>
<dbReference type="STRING" id="402626.Rpic_0376"/>
<dbReference type="KEGG" id="rpi:Rpic_0376"/>
<dbReference type="eggNOG" id="COG2255">
    <property type="taxonomic scope" value="Bacteria"/>
</dbReference>
<dbReference type="HOGENOM" id="CLU_055599_1_0_4"/>
<dbReference type="GO" id="GO:0005737">
    <property type="term" value="C:cytoplasm"/>
    <property type="evidence" value="ECO:0007669"/>
    <property type="project" value="UniProtKB-SubCell"/>
</dbReference>
<dbReference type="GO" id="GO:0048476">
    <property type="term" value="C:Holliday junction resolvase complex"/>
    <property type="evidence" value="ECO:0007669"/>
    <property type="project" value="UniProtKB-UniRule"/>
</dbReference>
<dbReference type="GO" id="GO:0005524">
    <property type="term" value="F:ATP binding"/>
    <property type="evidence" value="ECO:0007669"/>
    <property type="project" value="UniProtKB-UniRule"/>
</dbReference>
<dbReference type="GO" id="GO:0016887">
    <property type="term" value="F:ATP hydrolysis activity"/>
    <property type="evidence" value="ECO:0007669"/>
    <property type="project" value="InterPro"/>
</dbReference>
<dbReference type="GO" id="GO:0000400">
    <property type="term" value="F:four-way junction DNA binding"/>
    <property type="evidence" value="ECO:0007669"/>
    <property type="project" value="UniProtKB-UniRule"/>
</dbReference>
<dbReference type="GO" id="GO:0009378">
    <property type="term" value="F:four-way junction helicase activity"/>
    <property type="evidence" value="ECO:0007669"/>
    <property type="project" value="InterPro"/>
</dbReference>
<dbReference type="GO" id="GO:0006310">
    <property type="term" value="P:DNA recombination"/>
    <property type="evidence" value="ECO:0007669"/>
    <property type="project" value="UniProtKB-UniRule"/>
</dbReference>
<dbReference type="GO" id="GO:0006281">
    <property type="term" value="P:DNA repair"/>
    <property type="evidence" value="ECO:0007669"/>
    <property type="project" value="UniProtKB-UniRule"/>
</dbReference>
<dbReference type="CDD" id="cd00009">
    <property type="entry name" value="AAA"/>
    <property type="match status" value="1"/>
</dbReference>
<dbReference type="FunFam" id="1.10.10.10:FF:000086">
    <property type="entry name" value="Holliday junction ATP-dependent DNA helicase RuvB"/>
    <property type="match status" value="1"/>
</dbReference>
<dbReference type="FunFam" id="1.10.8.60:FF:000023">
    <property type="entry name" value="Holliday junction ATP-dependent DNA helicase RuvB"/>
    <property type="match status" value="1"/>
</dbReference>
<dbReference type="FunFam" id="3.40.50.300:FF:000073">
    <property type="entry name" value="Holliday junction ATP-dependent DNA helicase RuvB"/>
    <property type="match status" value="1"/>
</dbReference>
<dbReference type="Gene3D" id="1.10.8.60">
    <property type="match status" value="1"/>
</dbReference>
<dbReference type="Gene3D" id="3.40.50.300">
    <property type="entry name" value="P-loop containing nucleotide triphosphate hydrolases"/>
    <property type="match status" value="1"/>
</dbReference>
<dbReference type="Gene3D" id="1.10.10.10">
    <property type="entry name" value="Winged helix-like DNA-binding domain superfamily/Winged helix DNA-binding domain"/>
    <property type="match status" value="1"/>
</dbReference>
<dbReference type="HAMAP" id="MF_00016">
    <property type="entry name" value="DNA_HJ_migration_RuvB"/>
    <property type="match status" value="1"/>
</dbReference>
<dbReference type="InterPro" id="IPR003593">
    <property type="entry name" value="AAA+_ATPase"/>
</dbReference>
<dbReference type="InterPro" id="IPR041445">
    <property type="entry name" value="AAA_lid_4"/>
</dbReference>
<dbReference type="InterPro" id="IPR004605">
    <property type="entry name" value="DNA_helicase_Holl-junc_RuvB"/>
</dbReference>
<dbReference type="InterPro" id="IPR027417">
    <property type="entry name" value="P-loop_NTPase"/>
</dbReference>
<dbReference type="InterPro" id="IPR008824">
    <property type="entry name" value="RuvB-like_N"/>
</dbReference>
<dbReference type="InterPro" id="IPR008823">
    <property type="entry name" value="RuvB_C"/>
</dbReference>
<dbReference type="InterPro" id="IPR036388">
    <property type="entry name" value="WH-like_DNA-bd_sf"/>
</dbReference>
<dbReference type="InterPro" id="IPR036390">
    <property type="entry name" value="WH_DNA-bd_sf"/>
</dbReference>
<dbReference type="NCBIfam" id="NF000868">
    <property type="entry name" value="PRK00080.1"/>
    <property type="match status" value="1"/>
</dbReference>
<dbReference type="NCBIfam" id="TIGR00635">
    <property type="entry name" value="ruvB"/>
    <property type="match status" value="1"/>
</dbReference>
<dbReference type="PANTHER" id="PTHR42848">
    <property type="match status" value="1"/>
</dbReference>
<dbReference type="PANTHER" id="PTHR42848:SF1">
    <property type="entry name" value="HOLLIDAY JUNCTION BRANCH MIGRATION COMPLEX SUBUNIT RUVB"/>
    <property type="match status" value="1"/>
</dbReference>
<dbReference type="Pfam" id="PF17864">
    <property type="entry name" value="AAA_lid_4"/>
    <property type="match status" value="1"/>
</dbReference>
<dbReference type="Pfam" id="PF05491">
    <property type="entry name" value="RuvB_C"/>
    <property type="match status" value="1"/>
</dbReference>
<dbReference type="Pfam" id="PF05496">
    <property type="entry name" value="RuvB_N"/>
    <property type="match status" value="1"/>
</dbReference>
<dbReference type="SMART" id="SM00382">
    <property type="entry name" value="AAA"/>
    <property type="match status" value="1"/>
</dbReference>
<dbReference type="SUPFAM" id="SSF52540">
    <property type="entry name" value="P-loop containing nucleoside triphosphate hydrolases"/>
    <property type="match status" value="1"/>
</dbReference>
<dbReference type="SUPFAM" id="SSF46785">
    <property type="entry name" value="Winged helix' DNA-binding domain"/>
    <property type="match status" value="1"/>
</dbReference>
<name>RUVB_RALPJ</name>
<comment type="function">
    <text evidence="1">The RuvA-RuvB-RuvC complex processes Holliday junction (HJ) DNA during genetic recombination and DNA repair, while the RuvA-RuvB complex plays an important role in the rescue of blocked DNA replication forks via replication fork reversal (RFR). RuvA specifically binds to HJ cruciform DNA, conferring on it an open structure. The RuvB hexamer acts as an ATP-dependent pump, pulling dsDNA into and through the RuvAB complex. RuvB forms 2 homohexamers on either side of HJ DNA bound by 1 or 2 RuvA tetramers; 4 subunits per hexamer contact DNA at a time. Coordinated motions by a converter formed by DNA-disengaged RuvB subunits stimulates ATP hydrolysis and nucleotide exchange. Immobilization of the converter enables RuvB to convert the ATP-contained energy into a lever motion, pulling 2 nucleotides of DNA out of the RuvA tetramer per ATP hydrolyzed, thus driving DNA branch migration. The RuvB motors rotate together with the DNA substrate, which together with the progressing nucleotide cycle form the mechanistic basis for DNA recombination by continuous HJ branch migration. Branch migration allows RuvC to scan DNA until it finds its consensus sequence, where it cleaves and resolves cruciform DNA.</text>
</comment>
<comment type="catalytic activity">
    <reaction evidence="1">
        <text>ATP + H2O = ADP + phosphate + H(+)</text>
        <dbReference type="Rhea" id="RHEA:13065"/>
        <dbReference type="ChEBI" id="CHEBI:15377"/>
        <dbReference type="ChEBI" id="CHEBI:15378"/>
        <dbReference type="ChEBI" id="CHEBI:30616"/>
        <dbReference type="ChEBI" id="CHEBI:43474"/>
        <dbReference type="ChEBI" id="CHEBI:456216"/>
    </reaction>
</comment>
<comment type="subunit">
    <text evidence="1">Homohexamer. Forms an RuvA(8)-RuvB(12)-Holliday junction (HJ) complex. HJ DNA is sandwiched between 2 RuvA tetramers; dsDNA enters through RuvA and exits via RuvB. An RuvB hexamer assembles on each DNA strand where it exits the tetramer. Each RuvB hexamer is contacted by two RuvA subunits (via domain III) on 2 adjacent RuvB subunits; this complex drives branch migration. In the full resolvosome a probable DNA-RuvA(4)-RuvB(12)-RuvC(2) complex forms which resolves the HJ.</text>
</comment>
<comment type="subcellular location">
    <subcellularLocation>
        <location evidence="1">Cytoplasm</location>
    </subcellularLocation>
</comment>
<comment type="domain">
    <text evidence="1">Has 3 domains, the large (RuvB-L) and small ATPase (RuvB-S) domains and the C-terminal head (RuvB-H) domain. The head domain binds DNA, while the ATPase domains jointly bind ATP, ADP or are empty depending on the state of the subunit in the translocation cycle. During a single DNA translocation step the structure of each domain remains the same, but their relative positions change.</text>
</comment>
<comment type="similarity">
    <text evidence="1">Belongs to the RuvB family.</text>
</comment>
<proteinExistence type="inferred from homology"/>
<reference key="1">
    <citation type="submission" date="2008-05" db="EMBL/GenBank/DDBJ databases">
        <title>Complete sequence of chromosome 1 of Ralstonia pickettii 12J.</title>
        <authorList>
            <person name="Lucas S."/>
            <person name="Copeland A."/>
            <person name="Lapidus A."/>
            <person name="Glavina del Rio T."/>
            <person name="Dalin E."/>
            <person name="Tice H."/>
            <person name="Bruce D."/>
            <person name="Goodwin L."/>
            <person name="Pitluck S."/>
            <person name="Meincke L."/>
            <person name="Brettin T."/>
            <person name="Detter J.C."/>
            <person name="Han C."/>
            <person name="Kuske C.R."/>
            <person name="Schmutz J."/>
            <person name="Larimer F."/>
            <person name="Land M."/>
            <person name="Hauser L."/>
            <person name="Kyrpides N."/>
            <person name="Mikhailova N."/>
            <person name="Marsh T."/>
            <person name="Richardson P."/>
        </authorList>
    </citation>
    <scope>NUCLEOTIDE SEQUENCE [LARGE SCALE GENOMIC DNA]</scope>
    <source>
        <strain>12J</strain>
    </source>
</reference>
<feature type="chain" id="PRO_1000089666" description="Holliday junction branch migration complex subunit RuvB">
    <location>
        <begin position="1"/>
        <end position="357"/>
    </location>
</feature>
<feature type="region of interest" description="Large ATPase domain (RuvB-L)" evidence="1">
    <location>
        <begin position="4"/>
        <end position="195"/>
    </location>
</feature>
<feature type="region of interest" description="Small ATPAse domain (RuvB-S)" evidence="1">
    <location>
        <begin position="196"/>
        <end position="266"/>
    </location>
</feature>
<feature type="region of interest" description="Head domain (RuvB-H)" evidence="1">
    <location>
        <begin position="269"/>
        <end position="357"/>
    </location>
</feature>
<feature type="binding site" evidence="1">
    <location>
        <position position="34"/>
    </location>
    <ligand>
        <name>ATP</name>
        <dbReference type="ChEBI" id="CHEBI:30616"/>
    </ligand>
</feature>
<feature type="binding site" evidence="1">
    <location>
        <position position="35"/>
    </location>
    <ligand>
        <name>ATP</name>
        <dbReference type="ChEBI" id="CHEBI:30616"/>
    </ligand>
</feature>
<feature type="binding site" evidence="1">
    <location>
        <position position="76"/>
    </location>
    <ligand>
        <name>ATP</name>
        <dbReference type="ChEBI" id="CHEBI:30616"/>
    </ligand>
</feature>
<feature type="binding site" evidence="1">
    <location>
        <position position="79"/>
    </location>
    <ligand>
        <name>ATP</name>
        <dbReference type="ChEBI" id="CHEBI:30616"/>
    </ligand>
</feature>
<feature type="binding site" evidence="1">
    <location>
        <position position="80"/>
    </location>
    <ligand>
        <name>ATP</name>
        <dbReference type="ChEBI" id="CHEBI:30616"/>
    </ligand>
</feature>
<feature type="binding site" evidence="1">
    <location>
        <position position="80"/>
    </location>
    <ligand>
        <name>Mg(2+)</name>
        <dbReference type="ChEBI" id="CHEBI:18420"/>
    </ligand>
</feature>
<feature type="binding site" evidence="1">
    <location>
        <position position="81"/>
    </location>
    <ligand>
        <name>ATP</name>
        <dbReference type="ChEBI" id="CHEBI:30616"/>
    </ligand>
</feature>
<feature type="binding site" evidence="1">
    <location>
        <begin position="142"/>
        <end position="144"/>
    </location>
    <ligand>
        <name>ATP</name>
        <dbReference type="ChEBI" id="CHEBI:30616"/>
    </ligand>
</feature>
<feature type="binding site" evidence="1">
    <location>
        <position position="185"/>
    </location>
    <ligand>
        <name>ATP</name>
        <dbReference type="ChEBI" id="CHEBI:30616"/>
    </ligand>
</feature>
<feature type="binding site" evidence="1">
    <location>
        <position position="195"/>
    </location>
    <ligand>
        <name>ATP</name>
        <dbReference type="ChEBI" id="CHEBI:30616"/>
    </ligand>
</feature>
<feature type="binding site" evidence="1">
    <location>
        <position position="232"/>
    </location>
    <ligand>
        <name>ATP</name>
        <dbReference type="ChEBI" id="CHEBI:30616"/>
    </ligand>
</feature>
<feature type="binding site" evidence="1">
    <location>
        <position position="305"/>
    </location>
    <ligand>
        <name>DNA</name>
        <dbReference type="ChEBI" id="CHEBI:16991"/>
    </ligand>
</feature>
<feature type="binding site" evidence="1">
    <location>
        <position position="324"/>
    </location>
    <ligand>
        <name>DNA</name>
        <dbReference type="ChEBI" id="CHEBI:16991"/>
    </ligand>
</feature>
<feature type="binding site" evidence="1">
    <location>
        <position position="329"/>
    </location>
    <ligand>
        <name>DNA</name>
        <dbReference type="ChEBI" id="CHEBI:16991"/>
    </ligand>
</feature>
<gene>
    <name evidence="1" type="primary">ruvB</name>
    <name type="ordered locus">Rpic_0376</name>
</gene>
<protein>
    <recommendedName>
        <fullName evidence="1">Holliday junction branch migration complex subunit RuvB</fullName>
        <ecNumber evidence="1">3.6.4.-</ecNumber>
    </recommendedName>
</protein>
<evidence type="ECO:0000255" key="1">
    <source>
        <dbReference type="HAMAP-Rule" id="MF_00016"/>
    </source>
</evidence>
<organism>
    <name type="scientific">Ralstonia pickettii (strain 12J)</name>
    <dbReference type="NCBI Taxonomy" id="402626"/>
    <lineage>
        <taxon>Bacteria</taxon>
        <taxon>Pseudomonadati</taxon>
        <taxon>Pseudomonadota</taxon>
        <taxon>Betaproteobacteria</taxon>
        <taxon>Burkholderiales</taxon>
        <taxon>Burkholderiaceae</taxon>
        <taxon>Ralstonia</taxon>
    </lineage>
</organism>
<keyword id="KW-0067">ATP-binding</keyword>
<keyword id="KW-0963">Cytoplasm</keyword>
<keyword id="KW-0227">DNA damage</keyword>
<keyword id="KW-0233">DNA recombination</keyword>
<keyword id="KW-0234">DNA repair</keyword>
<keyword id="KW-0238">DNA-binding</keyword>
<keyword id="KW-0378">Hydrolase</keyword>
<keyword id="KW-0547">Nucleotide-binding</keyword>
<accession>B2UFL1</accession>